<dbReference type="EMBL" id="CP001144">
    <property type="protein sequence ID" value="ACH74353.1"/>
    <property type="molecule type" value="Genomic_DNA"/>
</dbReference>
<dbReference type="RefSeq" id="WP_001024856.1">
    <property type="nucleotide sequence ID" value="NC_011205.1"/>
</dbReference>
<dbReference type="SMR" id="B5FPD7"/>
<dbReference type="KEGG" id="sed:SeD_A0975"/>
<dbReference type="HOGENOM" id="CLU_035023_2_2_6"/>
<dbReference type="Proteomes" id="UP000008322">
    <property type="component" value="Chromosome"/>
</dbReference>
<dbReference type="GO" id="GO:0005886">
    <property type="term" value="C:plasma membrane"/>
    <property type="evidence" value="ECO:0007669"/>
    <property type="project" value="UniProtKB-SubCell"/>
</dbReference>
<dbReference type="GO" id="GO:0008324">
    <property type="term" value="F:monoatomic cation transmembrane transporter activity"/>
    <property type="evidence" value="ECO:0007669"/>
    <property type="project" value="InterPro"/>
</dbReference>
<dbReference type="GO" id="GO:0006813">
    <property type="term" value="P:potassium ion transport"/>
    <property type="evidence" value="ECO:0007669"/>
    <property type="project" value="InterPro"/>
</dbReference>
<dbReference type="FunFam" id="3.30.70.1450:FF:000003">
    <property type="entry name" value="Putative transport protein YbjL"/>
    <property type="match status" value="1"/>
</dbReference>
<dbReference type="Gene3D" id="3.30.70.1450">
    <property type="entry name" value="Regulator of K+ conductance, C-terminal domain"/>
    <property type="match status" value="1"/>
</dbReference>
<dbReference type="HAMAP" id="MF_01015">
    <property type="entry name" value="YbjL"/>
    <property type="match status" value="1"/>
</dbReference>
<dbReference type="InterPro" id="IPR050144">
    <property type="entry name" value="AAE_transporter"/>
</dbReference>
<dbReference type="InterPro" id="IPR006037">
    <property type="entry name" value="RCK_C"/>
</dbReference>
<dbReference type="InterPro" id="IPR036721">
    <property type="entry name" value="RCK_C_sf"/>
</dbReference>
<dbReference type="InterPro" id="IPR023017">
    <property type="entry name" value="Transp_YbjL_put"/>
</dbReference>
<dbReference type="InterPro" id="IPR006512">
    <property type="entry name" value="YidE_YbjL"/>
</dbReference>
<dbReference type="NCBIfam" id="NF003440">
    <property type="entry name" value="PRK04972.1"/>
    <property type="match status" value="1"/>
</dbReference>
<dbReference type="NCBIfam" id="TIGR01625">
    <property type="entry name" value="YidE_YbjL_dupl"/>
    <property type="match status" value="2"/>
</dbReference>
<dbReference type="PANTHER" id="PTHR30445">
    <property type="entry name" value="K(+)_H(+) ANTIPORTER SUBUNIT KHTT"/>
    <property type="match status" value="1"/>
</dbReference>
<dbReference type="PANTHER" id="PTHR30445:SF10">
    <property type="entry name" value="TRANSPORT PROTEIN YBJL-RELATED"/>
    <property type="match status" value="1"/>
</dbReference>
<dbReference type="Pfam" id="PF06826">
    <property type="entry name" value="Asp-Al_Ex"/>
    <property type="match status" value="2"/>
</dbReference>
<dbReference type="Pfam" id="PF02080">
    <property type="entry name" value="TrkA_C"/>
    <property type="match status" value="2"/>
</dbReference>
<dbReference type="SUPFAM" id="SSF116726">
    <property type="entry name" value="TrkA C-terminal domain-like"/>
    <property type="match status" value="2"/>
</dbReference>
<dbReference type="PROSITE" id="PS51202">
    <property type="entry name" value="RCK_C"/>
    <property type="match status" value="2"/>
</dbReference>
<evidence type="ECO:0000255" key="1">
    <source>
        <dbReference type="HAMAP-Rule" id="MF_01015"/>
    </source>
</evidence>
<proteinExistence type="inferred from homology"/>
<comment type="subcellular location">
    <subcellularLocation>
        <location evidence="1">Cell membrane</location>
        <topology evidence="1">Multi-pass membrane protein</topology>
    </subcellularLocation>
</comment>
<comment type="similarity">
    <text evidence="1">Belongs to the AAE transporter (TC 2.A.81) family. YbjL subfamily.</text>
</comment>
<sequence>MNINVADLLNGNYILLLFVVLALGLCLGKLRLGSVQLGNSIGVLVVSLLLGQQHFSINTDALNLGFMLFIFCVGVEAGPNFFSIFFRDGKNYLMLALVMVGSALLIALGLGKLFGWDIGLTVGMLAGSMTSTPVLVGAGDTLRHSGIASTQLSSALDNLSLGYALTYLIGLVSLIVGARYLPKLQHQDLQTSAQQIARERGLDTDANRKVYLPVIRAYRVGPELVAWTDGKNLRELGIYRQTGCYIERIRRNGILANPDGDAVLQMGDEIALVGYPDAHARLDPSFRNGKEVFDRDLLDMRIVTEEIVVKNHNAVGRRLAQLKLTDHGCFLNRVIRSQIEMPIDDNVVLNKGDVLQVSGDARRVKTIADRIGFISIHSQVTDLLAFCAFFIIGLMIGMITFQFSNFSFGIGNAAGLLFAGIMLGFLRANHPTFGYIPQGALNMVKEFGLMVFMAGVGLSAGSGISNGLGAVGGQMLIAGLVVSLVPVVICFLFGAYVLRMNRALLFGAMMGARTCAPAMEIISDTARSNIPALGYAGTYAIANVLLTLAGTLIVIIWPGLG</sequence>
<keyword id="KW-1003">Cell membrane</keyword>
<keyword id="KW-0472">Membrane</keyword>
<keyword id="KW-0677">Repeat</keyword>
<keyword id="KW-0812">Transmembrane</keyword>
<keyword id="KW-1133">Transmembrane helix</keyword>
<keyword id="KW-0813">Transport</keyword>
<gene>
    <name evidence="1" type="primary">ybjL</name>
    <name type="ordered locus">SeD_A0975</name>
</gene>
<organism>
    <name type="scientific">Salmonella dublin (strain CT_02021853)</name>
    <dbReference type="NCBI Taxonomy" id="439851"/>
    <lineage>
        <taxon>Bacteria</taxon>
        <taxon>Pseudomonadati</taxon>
        <taxon>Pseudomonadota</taxon>
        <taxon>Gammaproteobacteria</taxon>
        <taxon>Enterobacterales</taxon>
        <taxon>Enterobacteriaceae</taxon>
        <taxon>Salmonella</taxon>
    </lineage>
</organism>
<accession>B5FPD7</accession>
<reference key="1">
    <citation type="journal article" date="2011" name="J. Bacteriol.">
        <title>Comparative genomics of 28 Salmonella enterica isolates: evidence for CRISPR-mediated adaptive sublineage evolution.</title>
        <authorList>
            <person name="Fricke W.F."/>
            <person name="Mammel M.K."/>
            <person name="McDermott P.F."/>
            <person name="Tartera C."/>
            <person name="White D.G."/>
            <person name="Leclerc J.E."/>
            <person name="Ravel J."/>
            <person name="Cebula T.A."/>
        </authorList>
    </citation>
    <scope>NUCLEOTIDE SEQUENCE [LARGE SCALE GENOMIC DNA]</scope>
    <source>
        <strain>CT_02021853</strain>
    </source>
</reference>
<protein>
    <recommendedName>
        <fullName evidence="1">Putative transport protein YbjL</fullName>
    </recommendedName>
</protein>
<name>YBJL_SALDC</name>
<feature type="chain" id="PRO_1000135190" description="Putative transport protein YbjL">
    <location>
        <begin position="1"/>
        <end position="561"/>
    </location>
</feature>
<feature type="transmembrane region" description="Helical" evidence="1">
    <location>
        <begin position="8"/>
        <end position="28"/>
    </location>
</feature>
<feature type="transmembrane region" description="Helical" evidence="1">
    <location>
        <begin position="32"/>
        <end position="52"/>
    </location>
</feature>
<feature type="transmembrane region" description="Helical" evidence="1">
    <location>
        <begin position="66"/>
        <end position="86"/>
    </location>
</feature>
<feature type="transmembrane region" description="Helical" evidence="1">
    <location>
        <begin position="94"/>
        <end position="114"/>
    </location>
</feature>
<feature type="transmembrane region" description="Helical" evidence="1">
    <location>
        <begin position="158"/>
        <end position="178"/>
    </location>
</feature>
<feature type="transmembrane region" description="Helical" evidence="1">
    <location>
        <begin position="383"/>
        <end position="403"/>
    </location>
</feature>
<feature type="transmembrane region" description="Helical" evidence="1">
    <location>
        <begin position="406"/>
        <end position="426"/>
    </location>
</feature>
<feature type="transmembrane region" description="Helical" evidence="1">
    <location>
        <begin position="447"/>
        <end position="467"/>
    </location>
</feature>
<feature type="transmembrane region" description="Helical" evidence="1">
    <location>
        <begin position="475"/>
        <end position="495"/>
    </location>
</feature>
<feature type="transmembrane region" description="Helical" evidence="1">
    <location>
        <begin position="540"/>
        <end position="560"/>
    </location>
</feature>
<feature type="domain" description="RCK C-terminal 1" evidence="1">
    <location>
        <begin position="200"/>
        <end position="288"/>
    </location>
</feature>
<feature type="domain" description="RCK C-terminal 2" evidence="1">
    <location>
        <begin position="292"/>
        <end position="373"/>
    </location>
</feature>